<feature type="chain" id="PRO_0000089310" description="Capsule biosynthesis protein CapC">
    <location>
        <begin position="1"/>
        <end position="149"/>
    </location>
</feature>
<feature type="transmembrane region" description="Helical" evidence="1">
    <location>
        <begin position="1"/>
        <end position="21"/>
    </location>
</feature>
<feature type="transmembrane region" description="Helical" evidence="1">
    <location>
        <begin position="24"/>
        <end position="44"/>
    </location>
</feature>
<feature type="transmembrane region" description="Helical" evidence="1">
    <location>
        <begin position="45"/>
        <end position="65"/>
    </location>
</feature>
<feature type="transmembrane region" description="Helical" evidence="1">
    <location>
        <begin position="129"/>
        <end position="149"/>
    </location>
</feature>
<protein>
    <recommendedName>
        <fullName>Capsule biosynthesis protein CapC</fullName>
    </recommendedName>
</protein>
<accession>P19581</accession>
<reference key="1">
    <citation type="journal article" date="1989" name="J. Bacteriol.">
        <title>Molecular characterization and protein analysis of the cap region, which is essential for encapsulation in Bacillus anthracis.</title>
        <authorList>
            <person name="Makino S."/>
            <person name="Uchida I."/>
            <person name="Terakado N."/>
            <person name="Sasakawa C."/>
            <person name="Yoshikawa M."/>
        </authorList>
    </citation>
    <scope>NUCLEOTIDE SEQUENCE [GENOMIC DNA]</scope>
    <source>
        <plasmid>pTE702</plasmid>
    </source>
</reference>
<reference key="2">
    <citation type="journal article" date="1999" name="J. Appl. Microbiol.">
        <title>Sequence, assembly and analysis of pXO1 and pXO2.</title>
        <authorList>
            <person name="Okinaka R.T."/>
            <person name="Cloud K."/>
            <person name="Hampton O."/>
            <person name="Hoffmaster A."/>
            <person name="Hill K.K."/>
            <person name="Keim P."/>
            <person name="Koehler T."/>
            <person name="Lamke G."/>
            <person name="Kumano S."/>
            <person name="Manter D."/>
            <person name="Martinez Y."/>
            <person name="Ricke D."/>
            <person name="Svensson R."/>
            <person name="Jackson P.J."/>
        </authorList>
    </citation>
    <scope>NUCLEOTIDE SEQUENCE [GENOMIC DNA]</scope>
    <source>
        <strain>Pasteur</strain>
        <plasmid>pXO2</plasmid>
    </source>
</reference>
<reference key="3">
    <citation type="journal article" date="2002" name="Science">
        <title>Comparative genome sequencing for discovery of novel polymorphisms in Bacillus anthracis.</title>
        <authorList>
            <person name="Read T.D."/>
            <person name="Salzberg S.L."/>
            <person name="Pop M."/>
            <person name="Shumway M.F."/>
            <person name="Umayam L."/>
            <person name="Jiang L."/>
            <person name="Holtzapple E."/>
            <person name="Busch J.D."/>
            <person name="Smith K.L."/>
            <person name="Schupp J.M."/>
            <person name="Solomon D."/>
            <person name="Keim P."/>
            <person name="Fraser C.M."/>
        </authorList>
    </citation>
    <scope>NUCLEOTIDE SEQUENCE [GENOMIC DNA]</scope>
    <source>
        <strain>Ames / isolate Florida / A2012</strain>
        <plasmid>pXO2</plasmid>
    </source>
</reference>
<reference key="4">
    <citation type="journal article" date="2009" name="J. Bacteriol.">
        <title>The complete genome sequence of Bacillus anthracis Ames 'Ancestor'.</title>
        <authorList>
            <person name="Ravel J."/>
            <person name="Jiang L."/>
            <person name="Stanley S.T."/>
            <person name="Wilson M.R."/>
            <person name="Decker R.S."/>
            <person name="Read T.D."/>
            <person name="Worsham P."/>
            <person name="Keim P.S."/>
            <person name="Salzberg S.L."/>
            <person name="Fraser-Liggett C.M."/>
            <person name="Rasko D.A."/>
        </authorList>
    </citation>
    <scope>NUCLEOTIDE SEQUENCE [LARGE SCALE GENOMIC DNA]</scope>
    <source>
        <strain>Ames ancestor</strain>
        <plasmid>pXO2</plasmid>
    </source>
</reference>
<reference key="5">
    <citation type="journal article" date="2004" name="J. Bacteriol.">
        <title>atxA controls Bacillus anthracis capsule synthesis via acpA and a newly discovered regulator, acpB.</title>
        <authorList>
            <person name="Drysdale M."/>
            <person name="Bourgogne A."/>
            <person name="Hilsenbeck S.G."/>
            <person name="Koehler T.M."/>
        </authorList>
    </citation>
    <scope>INDUCTION</scope>
    <source>
        <plasmid>pXO2</plasmid>
    </source>
</reference>
<organism>
    <name type="scientific">Bacillus anthracis</name>
    <dbReference type="NCBI Taxonomy" id="1392"/>
    <lineage>
        <taxon>Bacteria</taxon>
        <taxon>Bacillati</taxon>
        <taxon>Bacillota</taxon>
        <taxon>Bacilli</taxon>
        <taxon>Bacillales</taxon>
        <taxon>Bacillaceae</taxon>
        <taxon>Bacillus</taxon>
        <taxon>Bacillus cereus group</taxon>
    </lineage>
</organism>
<name>CAPC_BACAN</name>
<sequence length="149" mass="16523">MFGSDLYIALVLGVTLSLIFTERTGILPAGLVVPGYLALVFNQPVFMLVVLFISILTYVIVTYGVSRFMILYGRRKFAATLITGICLKLLFDYCYPVMPFEIFEFRGIGVIVPGLIANTIQRQGLPLTIGTTILLSGATFAIMNIYYLF</sequence>
<proteinExistence type="evidence at transcript level"/>
<geneLocation type="plasmid">
    <name>pXO2</name>
</geneLocation>
<geneLocation type="plasmid">
    <name>pTE702</name>
</geneLocation>
<dbReference type="EMBL" id="M24150">
    <property type="protein sequence ID" value="AAA22287.1"/>
    <property type="molecule type" value="Genomic_DNA"/>
</dbReference>
<dbReference type="EMBL" id="AF188935">
    <property type="protein sequence ID" value="AAF13662.1"/>
    <property type="molecule type" value="Genomic_DNA"/>
</dbReference>
<dbReference type="EMBL" id="AE011191">
    <property type="protein sequence ID" value="AAM26221.1"/>
    <property type="molecule type" value="Genomic_DNA"/>
</dbReference>
<dbReference type="EMBL" id="AE017335">
    <property type="protein sequence ID" value="AAT28995.2"/>
    <property type="molecule type" value="Genomic_DNA"/>
</dbReference>
<dbReference type="PIR" id="B30091">
    <property type="entry name" value="B30091"/>
</dbReference>
<dbReference type="RefSeq" id="NP_053212.1">
    <property type="nucleotide sequence ID" value="NC_002146.1"/>
</dbReference>
<dbReference type="RefSeq" id="WP_000468007.1">
    <property type="nucleotide sequence ID" value="NZ_VTZL01000009.1"/>
</dbReference>
<dbReference type="GeneID" id="45025366"/>
<dbReference type="KEGG" id="bar:GBAA_pXO2_0065"/>
<dbReference type="HOGENOM" id="CLU_143404_1_0_9"/>
<dbReference type="OMA" id="MVVPGYI"/>
<dbReference type="BioCyc" id="MetaCyc:GBAA_PXO2_0065-MONOMER"/>
<dbReference type="UniPathway" id="UPA00934"/>
<dbReference type="Proteomes" id="UP000000594">
    <property type="component" value="Plasmid pXO2"/>
</dbReference>
<dbReference type="GO" id="GO:0005886">
    <property type="term" value="C:plasma membrane"/>
    <property type="evidence" value="ECO:0007669"/>
    <property type="project" value="UniProtKB-SubCell"/>
</dbReference>
<dbReference type="GO" id="GO:0045227">
    <property type="term" value="P:capsule polysaccharide biosynthetic process"/>
    <property type="evidence" value="ECO:0007669"/>
    <property type="project" value="UniProtKB-UniPathway"/>
</dbReference>
<dbReference type="InterPro" id="IPR008338">
    <property type="entry name" value="Capsule_biosynth_CapC"/>
</dbReference>
<dbReference type="NCBIfam" id="TIGR04011">
    <property type="entry name" value="poly_gGlu_PgsC"/>
    <property type="match status" value="1"/>
</dbReference>
<dbReference type="Pfam" id="PF14102">
    <property type="entry name" value="Caps_synth_CapC"/>
    <property type="match status" value="1"/>
</dbReference>
<dbReference type="PRINTS" id="PR01759">
    <property type="entry name" value="CAPSULEPROTC"/>
</dbReference>
<comment type="function">
    <text>Essential for the synthesis of the polyglutamate capsule of B.anthracis which is one of the principal virulence factors during anthrax infection. May form a polyglutamyl synthetase complex together with proteins CapA and CapB. CapC may be the endogenous acceptor of glutamyl residues.</text>
</comment>
<comment type="pathway">
    <text>Capsule biogenesis; capsule polysaccharide biosynthesis.</text>
</comment>
<comment type="subcellular location">
    <subcellularLocation>
        <location evidence="3">Cell membrane</location>
        <topology evidence="3">Multi-pass membrane protein</topology>
    </subcellularLocation>
</comment>
<comment type="induction">
    <text evidence="2">Capsule synthesis is transcriptionally regulated by AtxA, AcpA and AcpB.</text>
</comment>
<keyword id="KW-0972">Capsule biogenesis/degradation</keyword>
<keyword id="KW-1003">Cell membrane</keyword>
<keyword id="KW-0472">Membrane</keyword>
<keyword id="KW-0614">Plasmid</keyword>
<keyword id="KW-1185">Reference proteome</keyword>
<keyword id="KW-0812">Transmembrane</keyword>
<keyword id="KW-1133">Transmembrane helix</keyword>
<keyword id="KW-0843">Virulence</keyword>
<gene>
    <name type="primary">capC</name>
    <name type="ordered locus">pXO2-57</name>
    <name type="ordered locus">BXB0065</name>
    <name type="ordered locus">GBAA_pXO2_0065</name>
</gene>
<evidence type="ECO:0000255" key="1"/>
<evidence type="ECO:0000269" key="2">
    <source>
    </source>
</evidence>
<evidence type="ECO:0000305" key="3"/>